<proteinExistence type="inferred from homology"/>
<name>SSRP_SINMW</name>
<feature type="chain" id="PRO_1000002151" description="SsrA-binding protein">
    <location>
        <begin position="1"/>
        <end position="159"/>
    </location>
</feature>
<feature type="region of interest" description="Disordered" evidence="2">
    <location>
        <begin position="133"/>
        <end position="159"/>
    </location>
</feature>
<feature type="compositionally biased region" description="Basic and acidic residues" evidence="2">
    <location>
        <begin position="137"/>
        <end position="159"/>
    </location>
</feature>
<accession>A6U7A0</accession>
<sequence>MAPKGSERTVKKVVAENRKARFNYEIVDTYEAGLVLTGTEVKSLREGKANIAESYATDEGGEIWLINSYLPEYLQANRFNHETRRRRKLLLSRREVNRLQGAVNREGMSLIPLRIYFNERGRAKLELALGKGKKLHDKRETSKERDWNRQKNRLLKERG</sequence>
<organism>
    <name type="scientific">Sinorhizobium medicae (strain WSM419)</name>
    <name type="common">Ensifer medicae</name>
    <dbReference type="NCBI Taxonomy" id="366394"/>
    <lineage>
        <taxon>Bacteria</taxon>
        <taxon>Pseudomonadati</taxon>
        <taxon>Pseudomonadota</taxon>
        <taxon>Alphaproteobacteria</taxon>
        <taxon>Hyphomicrobiales</taxon>
        <taxon>Rhizobiaceae</taxon>
        <taxon>Sinorhizobium/Ensifer group</taxon>
        <taxon>Sinorhizobium</taxon>
    </lineage>
</organism>
<dbReference type="EMBL" id="CP000738">
    <property type="protein sequence ID" value="ABR59530.1"/>
    <property type="molecule type" value="Genomic_DNA"/>
</dbReference>
<dbReference type="RefSeq" id="WP_011974876.1">
    <property type="nucleotide sequence ID" value="NC_009636.1"/>
</dbReference>
<dbReference type="RefSeq" id="YP_001326365.1">
    <property type="nucleotide sequence ID" value="NC_009636.1"/>
</dbReference>
<dbReference type="SMR" id="A6U7A0"/>
<dbReference type="STRING" id="366394.Smed_0674"/>
<dbReference type="GeneID" id="61609950"/>
<dbReference type="KEGG" id="smd:Smed_0674"/>
<dbReference type="PATRIC" id="fig|366394.8.peg.3776"/>
<dbReference type="eggNOG" id="COG0691">
    <property type="taxonomic scope" value="Bacteria"/>
</dbReference>
<dbReference type="HOGENOM" id="CLU_108953_0_1_5"/>
<dbReference type="OrthoDB" id="9805462at2"/>
<dbReference type="Proteomes" id="UP000001108">
    <property type="component" value="Chromosome"/>
</dbReference>
<dbReference type="GO" id="GO:0005829">
    <property type="term" value="C:cytosol"/>
    <property type="evidence" value="ECO:0007669"/>
    <property type="project" value="TreeGrafter"/>
</dbReference>
<dbReference type="GO" id="GO:0003723">
    <property type="term" value="F:RNA binding"/>
    <property type="evidence" value="ECO:0007669"/>
    <property type="project" value="UniProtKB-UniRule"/>
</dbReference>
<dbReference type="GO" id="GO:0070929">
    <property type="term" value="P:trans-translation"/>
    <property type="evidence" value="ECO:0007669"/>
    <property type="project" value="UniProtKB-UniRule"/>
</dbReference>
<dbReference type="CDD" id="cd09294">
    <property type="entry name" value="SmpB"/>
    <property type="match status" value="1"/>
</dbReference>
<dbReference type="Gene3D" id="2.40.280.10">
    <property type="match status" value="1"/>
</dbReference>
<dbReference type="HAMAP" id="MF_00023">
    <property type="entry name" value="SmpB"/>
    <property type="match status" value="1"/>
</dbReference>
<dbReference type="InterPro" id="IPR023620">
    <property type="entry name" value="SmpB"/>
</dbReference>
<dbReference type="InterPro" id="IPR000037">
    <property type="entry name" value="SsrA-bd_prot"/>
</dbReference>
<dbReference type="InterPro" id="IPR020081">
    <property type="entry name" value="SsrA-bd_prot_CS"/>
</dbReference>
<dbReference type="NCBIfam" id="NF003843">
    <property type="entry name" value="PRK05422.1"/>
    <property type="match status" value="1"/>
</dbReference>
<dbReference type="NCBIfam" id="TIGR00086">
    <property type="entry name" value="smpB"/>
    <property type="match status" value="1"/>
</dbReference>
<dbReference type="PANTHER" id="PTHR30308:SF2">
    <property type="entry name" value="SSRA-BINDING PROTEIN"/>
    <property type="match status" value="1"/>
</dbReference>
<dbReference type="PANTHER" id="PTHR30308">
    <property type="entry name" value="TMRNA-BINDING COMPONENT OF TRANS-TRANSLATION TAGGING COMPLEX"/>
    <property type="match status" value="1"/>
</dbReference>
<dbReference type="Pfam" id="PF01668">
    <property type="entry name" value="SmpB"/>
    <property type="match status" value="1"/>
</dbReference>
<dbReference type="SUPFAM" id="SSF74982">
    <property type="entry name" value="Small protein B (SmpB)"/>
    <property type="match status" value="1"/>
</dbReference>
<dbReference type="PROSITE" id="PS01317">
    <property type="entry name" value="SSRP"/>
    <property type="match status" value="1"/>
</dbReference>
<evidence type="ECO:0000255" key="1">
    <source>
        <dbReference type="HAMAP-Rule" id="MF_00023"/>
    </source>
</evidence>
<evidence type="ECO:0000256" key="2">
    <source>
        <dbReference type="SAM" id="MobiDB-lite"/>
    </source>
</evidence>
<gene>
    <name evidence="1" type="primary">smpB</name>
    <name type="ordered locus">Smed_0674</name>
</gene>
<protein>
    <recommendedName>
        <fullName evidence="1">SsrA-binding protein</fullName>
    </recommendedName>
    <alternativeName>
        <fullName evidence="1">Small protein B</fullName>
    </alternativeName>
</protein>
<comment type="function">
    <text evidence="1">Required for rescue of stalled ribosomes mediated by trans-translation. Binds to transfer-messenger RNA (tmRNA), required for stable association of tmRNA with ribosomes. tmRNA and SmpB together mimic tRNA shape, replacing the anticodon stem-loop with SmpB. tmRNA is encoded by the ssrA gene; the 2 termini fold to resemble tRNA(Ala) and it encodes a 'tag peptide', a short internal open reading frame. During trans-translation Ala-aminoacylated tmRNA acts like a tRNA, entering the A-site of stalled ribosomes, displacing the stalled mRNA. The ribosome then switches to translate the ORF on the tmRNA; the nascent peptide is terminated with the 'tag peptide' encoded by the tmRNA and targeted for degradation. The ribosome is freed to recommence translation, which seems to be the essential function of trans-translation.</text>
</comment>
<comment type="subcellular location">
    <subcellularLocation>
        <location evidence="1">Cytoplasm</location>
    </subcellularLocation>
    <text evidence="1">The tmRNA-SmpB complex associates with stalled 70S ribosomes.</text>
</comment>
<comment type="similarity">
    <text evidence="1">Belongs to the SmpB family.</text>
</comment>
<keyword id="KW-0963">Cytoplasm</keyword>
<keyword id="KW-0694">RNA-binding</keyword>
<reference key="1">
    <citation type="submission" date="2007-06" db="EMBL/GenBank/DDBJ databases">
        <title>Complete sequence of Sinorhizobium medicae WSM419 chromosome.</title>
        <authorList>
            <consortium name="US DOE Joint Genome Institute"/>
            <person name="Copeland A."/>
            <person name="Lucas S."/>
            <person name="Lapidus A."/>
            <person name="Barry K."/>
            <person name="Glavina del Rio T."/>
            <person name="Dalin E."/>
            <person name="Tice H."/>
            <person name="Pitluck S."/>
            <person name="Chain P."/>
            <person name="Malfatti S."/>
            <person name="Shin M."/>
            <person name="Vergez L."/>
            <person name="Schmutz J."/>
            <person name="Larimer F."/>
            <person name="Land M."/>
            <person name="Hauser L."/>
            <person name="Kyrpides N."/>
            <person name="Mikhailova N."/>
            <person name="Reeve W.G."/>
            <person name="Richardson P."/>
        </authorList>
    </citation>
    <scope>NUCLEOTIDE SEQUENCE [LARGE SCALE GENOMIC DNA]</scope>
    <source>
        <strain>WSM419</strain>
    </source>
</reference>